<name>X325_NEUCR</name>
<sequence>MLTSTLLALASAALASAHTVITYPGWRGNNLKDNEEFPYGMQWTYPCGGLTLTQNRTYWPTTGGAISFQPGWFQGHATAFIYVNLGIGNDGPDGGPKNMSFPMVSPFQIIGPGKNPYPGTFCLPQVSTPAGFEFKEGDNATIQLVELAIHGAALYSCVDITFVPPGDPRVAQVNESNCFNSTDLGAADLYTINILESGRDRLALTSAAASLARMAGWVPLVAGGLWLML</sequence>
<protein>
    <recommendedName>
        <fullName evidence="9">Lytic polysaccharide monooxygenase-like protein ham-7</fullName>
        <shortName evidence="9">LPMO-like protein ham-7</shortName>
    </recommendedName>
    <alternativeName>
        <fullName evidence="8">Hyphal anastamosis protein 7</fullName>
    </alternativeName>
    <alternativeName>
        <fullName evidence="9">X325 family protein ham-7</fullName>
    </alternativeName>
</protein>
<gene>
    <name evidence="8" type="primary">ham-7</name>
    <name evidence="9" type="synonym">X325</name>
    <name type="ORF">NCU00881</name>
</gene>
<feature type="signal peptide" evidence="3">
    <location>
        <begin position="1"/>
        <end position="17"/>
    </location>
</feature>
<feature type="chain" id="PRO_5010153194" description="Lytic polysaccharide monooxygenase-like protein ham-7">
    <location>
        <begin position="18"/>
        <end position="206"/>
    </location>
</feature>
<feature type="propeptide" id="PRO_0000459761" description="Removed in mature form" evidence="3">
    <location>
        <begin position="207"/>
        <end position="229"/>
    </location>
</feature>
<feature type="binding site" evidence="1">
    <location>
        <position position="18"/>
    </location>
    <ligand>
        <name>Cu(2+)</name>
        <dbReference type="ChEBI" id="CHEBI:29036"/>
    </ligand>
</feature>
<feature type="lipid moiety-binding region" description="GPI-anchor amidated serine" evidence="3">
    <location>
        <position position="206"/>
    </location>
</feature>
<feature type="glycosylation site" description="N-linked (GlcNAc...) asparagine" evidence="4">
    <location>
        <position position="55"/>
    </location>
</feature>
<feature type="glycosylation site" description="N-linked (GlcNAc...) asparagine" evidence="4">
    <location>
        <position position="98"/>
    </location>
</feature>
<feature type="glycosylation site" description="N-linked (GlcNAc...) asparagine" evidence="4">
    <location>
        <position position="139"/>
    </location>
</feature>
<feature type="glycosylation site" description="N-linked (GlcNAc...) asparagine" evidence="4">
    <location>
        <position position="174"/>
    </location>
</feature>
<feature type="glycosylation site" description="N-linked (GlcNAc...) asparagine" evidence="4">
    <location>
        <position position="180"/>
    </location>
</feature>
<feature type="disulfide bond" evidence="1">
    <location>
        <begin position="47"/>
        <end position="157"/>
    </location>
</feature>
<feature type="disulfide bond" evidence="1">
    <location>
        <begin position="122"/>
        <end position="178"/>
    </location>
</feature>
<accession>V5IRP6</accession>
<dbReference type="EMBL" id="CM002236">
    <property type="protein sequence ID" value="ESA44241.1"/>
    <property type="molecule type" value="Genomic_DNA"/>
</dbReference>
<dbReference type="EMBL" id="CM002236">
    <property type="protein sequence ID" value="ESA44242.1"/>
    <property type="molecule type" value="Genomic_DNA"/>
</dbReference>
<dbReference type="RefSeq" id="XP_011392843.1">
    <property type="nucleotide sequence ID" value="XM_011394541.1"/>
</dbReference>
<dbReference type="RefSeq" id="XP_011392844.1">
    <property type="nucleotide sequence ID" value="XM_011394542.1"/>
</dbReference>
<dbReference type="SMR" id="V5IRP6"/>
<dbReference type="STRING" id="367110.V5IRP6"/>
<dbReference type="PaxDb" id="5141-EFNCRP00000000512"/>
<dbReference type="EnsemblFungi" id="ESA44241">
    <property type="protein sequence ID" value="ESA44241"/>
    <property type="gene ID" value="NCU00881"/>
</dbReference>
<dbReference type="EnsemblFungi" id="ESA44242">
    <property type="protein sequence ID" value="ESA44242"/>
    <property type="gene ID" value="NCU00881"/>
</dbReference>
<dbReference type="GeneID" id="3880921"/>
<dbReference type="KEGG" id="ncr:NCU00881"/>
<dbReference type="VEuPathDB" id="FungiDB:NCU00881"/>
<dbReference type="HOGENOM" id="CLU_070647_1_1_1"/>
<dbReference type="InParanoid" id="V5IRP6"/>
<dbReference type="OrthoDB" id="5329488at2759"/>
<dbReference type="Proteomes" id="UP000001805">
    <property type="component" value="Chromosome 1, Linkage Group I"/>
</dbReference>
<dbReference type="GO" id="GO:0005886">
    <property type="term" value="C:plasma membrane"/>
    <property type="evidence" value="ECO:0007669"/>
    <property type="project" value="UniProtKB-SubCell"/>
</dbReference>
<dbReference type="GO" id="GO:0098552">
    <property type="term" value="C:side of membrane"/>
    <property type="evidence" value="ECO:0007669"/>
    <property type="project" value="UniProtKB-KW"/>
</dbReference>
<dbReference type="GO" id="GO:0046872">
    <property type="term" value="F:metal ion binding"/>
    <property type="evidence" value="ECO:0007669"/>
    <property type="project" value="UniProtKB-KW"/>
</dbReference>
<dbReference type="CDD" id="cd21176">
    <property type="entry name" value="LPMO_auxiliary-like"/>
    <property type="match status" value="1"/>
</dbReference>
<dbReference type="InterPro" id="IPR046936">
    <property type="entry name" value="BIM1-like"/>
</dbReference>
<dbReference type="InterPro" id="IPR046530">
    <property type="entry name" value="BIM1-like_dom"/>
</dbReference>
<dbReference type="PANTHER" id="PTHR34992:SF10">
    <property type="entry name" value="COPPER ACQUISITION FACTOR BIM1-LIKE DOMAIN-CONTAINING PROTEIN"/>
    <property type="match status" value="1"/>
</dbReference>
<dbReference type="PANTHER" id="PTHR34992">
    <property type="entry name" value="HYPHAL ANASTAMOSIS-7 PROTEIN"/>
    <property type="match status" value="1"/>
</dbReference>
<dbReference type="Pfam" id="PF20238">
    <property type="entry name" value="BIM1-like_dom"/>
    <property type="match status" value="1"/>
</dbReference>
<organism>
    <name type="scientific">Neurospora crassa (strain ATCC 24698 / 74-OR23-1A / CBS 708.71 / DSM 1257 / FGSC 987)</name>
    <dbReference type="NCBI Taxonomy" id="367110"/>
    <lineage>
        <taxon>Eukaryota</taxon>
        <taxon>Fungi</taxon>
        <taxon>Dikarya</taxon>
        <taxon>Ascomycota</taxon>
        <taxon>Pezizomycotina</taxon>
        <taxon>Sordariomycetes</taxon>
        <taxon>Sordariomycetidae</taxon>
        <taxon>Sordariales</taxon>
        <taxon>Sordariaceae</taxon>
        <taxon>Neurospora</taxon>
    </lineage>
</organism>
<comment type="function">
    <text evidence="2 5 6 7 11">Lytic polysaccharide monooxygenase-like protein that has diverged to biological functions other than polysaccharide degradation since it does not perform oxidative cleavage of polysaccharides (Probable). Acts as the major cell wall sensor that regulates MAK-1-dependent hyphal anastomosis, the fusion of hyphal cells (PubMed:21666072, PubMed:22879952, PubMed:25279949). May also act as a cell surface-bound protein that functions in the copper-accumulation pathway (By similarity).</text>
</comment>
<comment type="cofactor">
    <cofactor evidence="1">
        <name>Cu(2+)</name>
        <dbReference type="ChEBI" id="CHEBI:29036"/>
    </cofactor>
    <text evidence="1">Binds 1 copper ion per subunit.</text>
</comment>
<comment type="subcellular location">
    <subcellularLocation>
        <location evidence="3">Cell membrane</location>
        <topology evidence="3">Lipid-anchor</topology>
        <topology evidence="3">GPI-anchor</topology>
    </subcellularLocation>
    <text evidence="11">Proteins attached to a GPI anchor via their C terminus are found in the outer leaflet of the lipid bilayer facing the extracellular environment. GPI anchors can also be considered as predetermined breaking points, which allow the release of proteins into the extracellular environment upon enzymatic cleavage.</text>
</comment>
<comment type="disruption phenotype">
    <text evidence="5 6 7">Leads to alteration in cell fusion between conidial anastomosis tubes (PubMed:21666072). Displays reduced basal MAK-1 activity (PubMed:22879952, PubMed:25279949).</text>
</comment>
<comment type="similarity">
    <text evidence="10">Belongs to the X325 family.</text>
</comment>
<reference key="1">
    <citation type="journal article" date="2003" name="Nature">
        <title>The genome sequence of the filamentous fungus Neurospora crassa.</title>
        <authorList>
            <person name="Galagan J.E."/>
            <person name="Calvo S.E."/>
            <person name="Borkovich K.A."/>
            <person name="Selker E.U."/>
            <person name="Read N.D."/>
            <person name="Jaffe D.B."/>
            <person name="FitzHugh W."/>
            <person name="Ma L.-J."/>
            <person name="Smirnov S."/>
            <person name="Purcell S."/>
            <person name="Rehman B."/>
            <person name="Elkins T."/>
            <person name="Engels R."/>
            <person name="Wang S."/>
            <person name="Nielsen C.B."/>
            <person name="Butler J."/>
            <person name="Endrizzi M."/>
            <person name="Qui D."/>
            <person name="Ianakiev P."/>
            <person name="Bell-Pedersen D."/>
            <person name="Nelson M.A."/>
            <person name="Werner-Washburne M."/>
            <person name="Selitrennikoff C.P."/>
            <person name="Kinsey J.A."/>
            <person name="Braun E.L."/>
            <person name="Zelter A."/>
            <person name="Schulte U."/>
            <person name="Kothe G.O."/>
            <person name="Jedd G."/>
            <person name="Mewes H.-W."/>
            <person name="Staben C."/>
            <person name="Marcotte E."/>
            <person name="Greenberg D."/>
            <person name="Roy A."/>
            <person name="Foley K."/>
            <person name="Naylor J."/>
            <person name="Stange-Thomann N."/>
            <person name="Barrett R."/>
            <person name="Gnerre S."/>
            <person name="Kamal M."/>
            <person name="Kamvysselis M."/>
            <person name="Mauceli E.W."/>
            <person name="Bielke C."/>
            <person name="Rudd S."/>
            <person name="Frishman D."/>
            <person name="Krystofova S."/>
            <person name="Rasmussen C."/>
            <person name="Metzenberg R.L."/>
            <person name="Perkins D.D."/>
            <person name="Kroken S."/>
            <person name="Cogoni C."/>
            <person name="Macino G."/>
            <person name="Catcheside D.E.A."/>
            <person name="Li W."/>
            <person name="Pratt R.J."/>
            <person name="Osmani S.A."/>
            <person name="DeSouza C.P.C."/>
            <person name="Glass N.L."/>
            <person name="Orbach M.J."/>
            <person name="Berglund J.A."/>
            <person name="Voelker R."/>
            <person name="Yarden O."/>
            <person name="Plamann M."/>
            <person name="Seiler S."/>
            <person name="Dunlap J.C."/>
            <person name="Radford A."/>
            <person name="Aramayo R."/>
            <person name="Natvig D.O."/>
            <person name="Alex L.A."/>
            <person name="Mannhaupt G."/>
            <person name="Ebbole D.J."/>
            <person name="Freitag M."/>
            <person name="Paulsen I."/>
            <person name="Sachs M.S."/>
            <person name="Lander E.S."/>
            <person name="Nusbaum C."/>
            <person name="Birren B.W."/>
        </authorList>
    </citation>
    <scope>NUCLEOTIDE SEQUENCE [LARGE SCALE GENOMIC DNA]</scope>
    <source>
        <strain>ATCC 24698 / 74-OR23-1A / CBS 708.71 / DSM 1257 / FGSC 987</strain>
    </source>
</reference>
<reference key="2">
    <citation type="submission" date="2013-04" db="EMBL/GenBank/DDBJ databases">
        <title>The Genome Sequence of Neurospora crassa strain OR74A.</title>
        <authorList>
            <consortium name="The Broad Institute Genome Sequencing Platform"/>
            <person name="Galagan J."/>
            <person name="Henn M.R."/>
            <person name="Hood H."/>
            <person name="Radford A."/>
            <person name="Collins R.A."/>
            <person name="Walker B."/>
            <person name="Young S.K."/>
            <person name="Zeng Q."/>
            <person name="Gargeya S."/>
            <person name="Fitzgerald M."/>
            <person name="Haas B."/>
            <person name="Abouelleil A."/>
            <person name="Allen A.W."/>
            <person name="Alvarado L."/>
            <person name="Arachchi H.M."/>
            <person name="Berlin A."/>
            <person name="Chapman S.B."/>
            <person name="Chen Z."/>
            <person name="Gainer-Dewar J."/>
            <person name="Gnerre S."/>
            <person name="Goldberg J."/>
            <person name="Griggs A."/>
            <person name="Gujja S."/>
            <person name="Hansen M."/>
            <person name="Howarth C."/>
            <person name="Imamovic A."/>
            <person name="Ireland A."/>
            <person name="Larimer J.B."/>
            <person name="McCowan C."/>
            <person name="Murphy C."/>
            <person name="Pearson M.D."/>
            <person name="Poon T.W."/>
            <person name="Priest M."/>
            <person name="Roberts A."/>
            <person name="Saif S."/>
            <person name="Shea T.D."/>
            <person name="Sisk P."/>
            <person name="Shea T."/>
            <person name="Sykes S."/>
            <person name="Zucker J."/>
            <person name="Kodira C."/>
            <person name="Bowman B."/>
            <person name="Colot H."/>
            <person name="Ebbole D."/>
            <person name="Rasmussen C."/>
            <person name="Baker C."/>
            <person name="Kalkman E."/>
            <person name="Chen C.-H."/>
            <person name="Shi M."/>
            <person name="Mathur R."/>
            <person name="Lambreghts R."/>
            <person name="Collopy P."/>
            <person name="Mehra A."/>
            <person name="Schweredtfeger C."/>
            <person name="Hong C."/>
            <person name="Belden W."/>
            <person name="Glass N.L."/>
            <person name="Borkovich K."/>
            <person name="Dunlap J."/>
            <person name="Lander E."/>
            <person name="Wortman J."/>
            <person name="Nusbaum C."/>
            <person name="Sachs M."/>
            <person name="Birren B."/>
        </authorList>
    </citation>
    <scope>NUCLEOTIDE SEQUENCE [LARGE SCALE GENOMIC DNA]</scope>
    <source>
        <strain>ATCC 24698 / 74-OR23-1A / CBS 708.71 / DSM 1257 / FGSC 987</strain>
    </source>
</reference>
<reference key="3">
    <citation type="journal article" date="2011" name="Eukaryot. Cell">
        <title>Identification and characterization of genes required for cell-to-cell fusion in Neurospora crassa.</title>
        <authorList>
            <person name="Fu C."/>
            <person name="Iyer P."/>
            <person name="Herkal A."/>
            <person name="Abdullah J."/>
            <person name="Stout A."/>
            <person name="Free S.J."/>
        </authorList>
    </citation>
    <scope>FUNCTION</scope>
    <scope>DISRUPTION PHENOTYPE</scope>
</reference>
<reference key="4">
    <citation type="journal article" date="2012" name="PLoS ONE">
        <title>WSC-1 and HAM-7 are MAK-1 MAP kinase pathway sensors required for cell wall integrity and hyphal fusion in Neurospora crassa.</title>
        <authorList>
            <person name="Maddi A."/>
            <person name="Dettman A."/>
            <person name="Fu C."/>
            <person name="Seiler S."/>
            <person name="Free S.J."/>
        </authorList>
    </citation>
    <scope>FUNCTION</scope>
</reference>
<reference key="5">
    <citation type="journal article" date="2014" name="PLoS ONE">
        <title>Characterization of the Neurospora crassa cell fusion proteins, HAM-6, HAM-7, HAM-8, HAM-9, HAM-10, AMPH-1 and WHI-2.</title>
        <authorList>
            <person name="Fu C."/>
            <person name="Ao J."/>
            <person name="Dettmann A."/>
            <person name="Seiler S."/>
            <person name="Free S.J."/>
        </authorList>
    </citation>
    <scope>FUNCTION</scope>
    <scope>DISRUPTION PHENOTYPE</scope>
</reference>
<reference key="6">
    <citation type="journal article" date="2020" name="Nat. Chem. Biol.">
        <title>A fungal family of lytic polysaccharide monooxygenase-like copper proteins.</title>
        <authorList>
            <person name="Labourel A."/>
            <person name="Frandsen K.E.H."/>
            <person name="Zhang F."/>
            <person name="Brouilly N."/>
            <person name="Grisel S."/>
            <person name="Haon M."/>
            <person name="Ciano L."/>
            <person name="Ropartz D."/>
            <person name="Fanuel M."/>
            <person name="Martin F."/>
            <person name="Navarro D."/>
            <person name="Rosso M.N."/>
            <person name="Tandrup T."/>
            <person name="Bissaro B."/>
            <person name="Johansen K.S."/>
            <person name="Zerva A."/>
            <person name="Walton P.H."/>
            <person name="Henrissat B."/>
            <person name="Leggio L.L."/>
            <person name="Berrin J.G."/>
        </authorList>
    </citation>
    <scope>IDENTIFICATION</scope>
    <scope>FUNCTION</scope>
</reference>
<keyword id="KW-1003">Cell membrane</keyword>
<keyword id="KW-0186">Copper</keyword>
<keyword id="KW-1015">Disulfide bond</keyword>
<keyword id="KW-0325">Glycoprotein</keyword>
<keyword id="KW-0336">GPI-anchor</keyword>
<keyword id="KW-0449">Lipoprotein</keyword>
<keyword id="KW-0472">Membrane</keyword>
<keyword id="KW-0479">Metal-binding</keyword>
<keyword id="KW-1185">Reference proteome</keyword>
<keyword id="KW-0732">Signal</keyword>
<evidence type="ECO:0000250" key="1">
    <source>
        <dbReference type="UniProtKB" id="A0A4P9I8G4"/>
    </source>
</evidence>
<evidence type="ECO:0000250" key="2">
    <source>
        <dbReference type="UniProtKB" id="J9VHN6"/>
    </source>
</evidence>
<evidence type="ECO:0000255" key="3"/>
<evidence type="ECO:0000255" key="4">
    <source>
        <dbReference type="PROSITE-ProRule" id="PRU00498"/>
    </source>
</evidence>
<evidence type="ECO:0000269" key="5">
    <source>
    </source>
</evidence>
<evidence type="ECO:0000269" key="6">
    <source>
    </source>
</evidence>
<evidence type="ECO:0000269" key="7">
    <source>
    </source>
</evidence>
<evidence type="ECO:0000303" key="8">
    <source>
    </source>
</evidence>
<evidence type="ECO:0000303" key="9">
    <source>
    </source>
</evidence>
<evidence type="ECO:0000305" key="10"/>
<evidence type="ECO:0000305" key="11">
    <source>
    </source>
</evidence>
<proteinExistence type="inferred from homology"/>